<feature type="chain" id="PRO_0000160822" description="Sorbitol dehydrogenase 2">
    <location>
        <begin position="1"/>
        <end position="357"/>
    </location>
</feature>
<feature type="binding site" evidence="3">
    <location>
        <position position="43"/>
    </location>
    <ligand>
        <name>Zn(2+)</name>
        <dbReference type="ChEBI" id="CHEBI:29105"/>
        <note>catalytic</note>
    </ligand>
</feature>
<feature type="binding site" evidence="1">
    <location>
        <position position="49"/>
    </location>
    <ligand>
        <name>substrate</name>
    </ligand>
</feature>
<feature type="binding site" evidence="3">
    <location>
        <position position="68"/>
    </location>
    <ligand>
        <name>Zn(2+)</name>
        <dbReference type="ChEBI" id="CHEBI:29105"/>
        <note>catalytic</note>
    </ligand>
</feature>
<feature type="binding site" evidence="3">
    <location>
        <position position="69"/>
    </location>
    <ligand>
        <name>Zn(2+)</name>
        <dbReference type="ChEBI" id="CHEBI:29105"/>
        <note>catalytic</note>
    </ligand>
</feature>
<feature type="binding site" evidence="1">
    <location>
        <position position="154"/>
    </location>
    <ligand>
        <name>substrate</name>
    </ligand>
</feature>
<feature type="binding site" evidence="3">
    <location>
        <position position="202"/>
    </location>
    <ligand>
        <name>NAD(+)</name>
        <dbReference type="ChEBI" id="CHEBI:57540"/>
    </ligand>
</feature>
<feature type="binding site" evidence="3">
    <location>
        <position position="207"/>
    </location>
    <ligand>
        <name>NAD(+)</name>
        <dbReference type="ChEBI" id="CHEBI:57540"/>
    </ligand>
</feature>
<feature type="binding site" evidence="3">
    <location>
        <begin position="275"/>
        <end position="277"/>
    </location>
    <ligand>
        <name>NAD(+)</name>
        <dbReference type="ChEBI" id="CHEBI:57540"/>
    </ligand>
</feature>
<feature type="binding site" evidence="3">
    <location>
        <begin position="299"/>
        <end position="301"/>
    </location>
    <ligand>
        <name>NAD(+)</name>
        <dbReference type="ChEBI" id="CHEBI:57540"/>
    </ligand>
</feature>
<feature type="binding site" evidence="1">
    <location>
        <position position="301"/>
    </location>
    <ligand>
        <name>substrate</name>
    </ligand>
</feature>
<feature type="binding site" evidence="1">
    <location>
        <position position="302"/>
    </location>
    <ligand>
        <name>substrate</name>
    </ligand>
</feature>
<gene>
    <name type="primary">SOR2</name>
    <name type="ordered locus">YDL246C</name>
</gene>
<proteinExistence type="inferred from homology"/>
<dbReference type="EC" id="1.1.1.-" evidence="2"/>
<dbReference type="EC" id="1.1.1.9" evidence="2"/>
<dbReference type="EMBL" id="Z74294">
    <property type="protein sequence ID" value="CAA98826.1"/>
    <property type="molecule type" value="Genomic_DNA"/>
</dbReference>
<dbReference type="EMBL" id="BK006938">
    <property type="protein sequence ID" value="DAA11621.1"/>
    <property type="molecule type" value="Genomic_DNA"/>
</dbReference>
<dbReference type="PIR" id="S67811">
    <property type="entry name" value="S67811"/>
</dbReference>
<dbReference type="RefSeq" id="NP_010035.1">
    <property type="nucleotide sequence ID" value="NM_001180306.1"/>
</dbReference>
<dbReference type="SMR" id="Q07786"/>
<dbReference type="BioGRID" id="31866">
    <property type="interactions" value="73"/>
</dbReference>
<dbReference type="DIP" id="DIP-1512N"/>
<dbReference type="FunCoup" id="Q07786">
    <property type="interactions" value="579"/>
</dbReference>
<dbReference type="IntAct" id="Q07786">
    <property type="interactions" value="6"/>
</dbReference>
<dbReference type="MINT" id="Q07786"/>
<dbReference type="STRING" id="4932.YDL246C"/>
<dbReference type="GlyGen" id="Q07786">
    <property type="glycosylation" value="1 site"/>
</dbReference>
<dbReference type="PaxDb" id="4932-YDL246C"/>
<dbReference type="EnsemblFungi" id="YDL246C_mRNA">
    <property type="protein sequence ID" value="YDL246C"/>
    <property type="gene ID" value="YDL246C"/>
</dbReference>
<dbReference type="GeneID" id="851351"/>
<dbReference type="KEGG" id="sce:YDL246C"/>
<dbReference type="AGR" id="SGD:S000002405"/>
<dbReference type="SGD" id="S000002405">
    <property type="gene designation" value="SOR2"/>
</dbReference>
<dbReference type="VEuPathDB" id="FungiDB:YDL246C"/>
<dbReference type="eggNOG" id="KOG0024">
    <property type="taxonomic scope" value="Eukaryota"/>
</dbReference>
<dbReference type="GeneTree" id="ENSGT00390000004074"/>
<dbReference type="HOGENOM" id="CLU_026673_11_5_1"/>
<dbReference type="InParanoid" id="Q07786"/>
<dbReference type="OMA" id="RYGPGCY"/>
<dbReference type="OrthoDB" id="3941538at2759"/>
<dbReference type="BioCyc" id="YEAST:G3O-29621-MONOMER"/>
<dbReference type="BRENDA" id="1.1.1.14">
    <property type="organism ID" value="984"/>
</dbReference>
<dbReference type="Reactome" id="R-SCE-5652227">
    <property type="pathway name" value="Fructose biosynthesis"/>
</dbReference>
<dbReference type="Reactome" id="R-SCE-5661270">
    <property type="pathway name" value="Formation of xylulose-5-phosphate"/>
</dbReference>
<dbReference type="PRO" id="PR:Q07786"/>
<dbReference type="Proteomes" id="UP000002311">
    <property type="component" value="Chromosome IV"/>
</dbReference>
<dbReference type="RNAct" id="Q07786">
    <property type="molecule type" value="protein"/>
</dbReference>
<dbReference type="GO" id="GO:0046526">
    <property type="term" value="F:D-xylulose reductase activity"/>
    <property type="evidence" value="ECO:0007669"/>
    <property type="project" value="UniProtKB-EC"/>
</dbReference>
<dbReference type="GO" id="GO:0003939">
    <property type="term" value="F:L-iditol 2-dehydrogenase (NAD+) activity"/>
    <property type="evidence" value="ECO:0000315"/>
    <property type="project" value="SGD"/>
</dbReference>
<dbReference type="GO" id="GO:0008270">
    <property type="term" value="F:zinc ion binding"/>
    <property type="evidence" value="ECO:0007669"/>
    <property type="project" value="InterPro"/>
</dbReference>
<dbReference type="GO" id="GO:0019318">
    <property type="term" value="P:hexose metabolic process"/>
    <property type="evidence" value="ECO:0000250"/>
    <property type="project" value="SGD"/>
</dbReference>
<dbReference type="GO" id="GO:0006062">
    <property type="term" value="P:sorbitol catabolic process"/>
    <property type="evidence" value="ECO:0000318"/>
    <property type="project" value="GO_Central"/>
</dbReference>
<dbReference type="CDD" id="cd05285">
    <property type="entry name" value="sorbitol_DH"/>
    <property type="match status" value="1"/>
</dbReference>
<dbReference type="FunFam" id="3.40.50.720:FF:000068">
    <property type="entry name" value="Sorbitol dehydrogenase"/>
    <property type="match status" value="1"/>
</dbReference>
<dbReference type="Gene3D" id="3.90.180.10">
    <property type="entry name" value="Medium-chain alcohol dehydrogenases, catalytic domain"/>
    <property type="match status" value="1"/>
</dbReference>
<dbReference type="Gene3D" id="3.40.50.720">
    <property type="entry name" value="NAD(P)-binding Rossmann-like Domain"/>
    <property type="match status" value="1"/>
</dbReference>
<dbReference type="InterPro" id="IPR013149">
    <property type="entry name" value="ADH-like_C"/>
</dbReference>
<dbReference type="InterPro" id="IPR013154">
    <property type="entry name" value="ADH-like_N"/>
</dbReference>
<dbReference type="InterPro" id="IPR002328">
    <property type="entry name" value="ADH_Zn_CS"/>
</dbReference>
<dbReference type="InterPro" id="IPR011032">
    <property type="entry name" value="GroES-like_sf"/>
</dbReference>
<dbReference type="InterPro" id="IPR036291">
    <property type="entry name" value="NAD(P)-bd_dom_sf"/>
</dbReference>
<dbReference type="InterPro" id="IPR020843">
    <property type="entry name" value="PKS_ER"/>
</dbReference>
<dbReference type="InterPro" id="IPR045306">
    <property type="entry name" value="SDH-like"/>
</dbReference>
<dbReference type="PANTHER" id="PTHR43161">
    <property type="entry name" value="SORBITOL DEHYDROGENASE"/>
    <property type="match status" value="1"/>
</dbReference>
<dbReference type="PANTHER" id="PTHR43161:SF9">
    <property type="entry name" value="SORBITOL DEHYDROGENASE"/>
    <property type="match status" value="1"/>
</dbReference>
<dbReference type="Pfam" id="PF08240">
    <property type="entry name" value="ADH_N"/>
    <property type="match status" value="1"/>
</dbReference>
<dbReference type="Pfam" id="PF00107">
    <property type="entry name" value="ADH_zinc_N"/>
    <property type="match status" value="1"/>
</dbReference>
<dbReference type="SMART" id="SM00829">
    <property type="entry name" value="PKS_ER"/>
    <property type="match status" value="1"/>
</dbReference>
<dbReference type="SUPFAM" id="SSF50129">
    <property type="entry name" value="GroES-like"/>
    <property type="match status" value="1"/>
</dbReference>
<dbReference type="SUPFAM" id="SSF51735">
    <property type="entry name" value="NAD(P)-binding Rossmann-fold domains"/>
    <property type="match status" value="1"/>
</dbReference>
<dbReference type="PROSITE" id="PS00059">
    <property type="entry name" value="ADH_ZINC"/>
    <property type="match status" value="1"/>
</dbReference>
<organism>
    <name type="scientific">Saccharomyces cerevisiae (strain ATCC 204508 / S288c)</name>
    <name type="common">Baker's yeast</name>
    <dbReference type="NCBI Taxonomy" id="559292"/>
    <lineage>
        <taxon>Eukaryota</taxon>
        <taxon>Fungi</taxon>
        <taxon>Dikarya</taxon>
        <taxon>Ascomycota</taxon>
        <taxon>Saccharomycotina</taxon>
        <taxon>Saccharomycetes</taxon>
        <taxon>Saccharomycetales</taxon>
        <taxon>Saccharomycetaceae</taxon>
        <taxon>Saccharomyces</taxon>
    </lineage>
</organism>
<comment type="function">
    <text evidence="2">Polyol dehydrogenase that catalyzes the reversible NAD(+)-dependent oxidation of various sugar alcohols. Is active with D-sorbitol (D-glucitol) and xylitol as substrates, leading to the C2-oxidized product D-fructose and D-xylulose, respectively.</text>
</comment>
<comment type="catalytic activity">
    <reaction evidence="2">
        <text>keto-D-fructose + NADH + H(+) = D-sorbitol + NAD(+)</text>
        <dbReference type="Rhea" id="RHEA:33031"/>
        <dbReference type="ChEBI" id="CHEBI:15378"/>
        <dbReference type="ChEBI" id="CHEBI:17924"/>
        <dbReference type="ChEBI" id="CHEBI:48095"/>
        <dbReference type="ChEBI" id="CHEBI:57540"/>
        <dbReference type="ChEBI" id="CHEBI:57945"/>
    </reaction>
</comment>
<comment type="catalytic activity">
    <reaction evidence="2">
        <text>xylitol + NAD(+) = D-xylulose + NADH + H(+)</text>
        <dbReference type="Rhea" id="RHEA:20433"/>
        <dbReference type="ChEBI" id="CHEBI:15378"/>
        <dbReference type="ChEBI" id="CHEBI:17140"/>
        <dbReference type="ChEBI" id="CHEBI:17151"/>
        <dbReference type="ChEBI" id="CHEBI:57540"/>
        <dbReference type="ChEBI" id="CHEBI:57945"/>
        <dbReference type="EC" id="1.1.1.9"/>
    </reaction>
</comment>
<comment type="cofactor">
    <cofactor evidence="3">
        <name>Zn(2+)</name>
        <dbReference type="ChEBI" id="CHEBI:29105"/>
    </cofactor>
    <text evidence="3">Binds 1 zinc ion per subunit.</text>
</comment>
<comment type="subunit">
    <text evidence="3">Homotetramer.</text>
</comment>
<comment type="similarity">
    <text evidence="4">Belongs to the zinc-containing alcohol dehydrogenase family.</text>
</comment>
<evidence type="ECO:0000250" key="1">
    <source>
        <dbReference type="UniProtKB" id="P07846"/>
    </source>
</evidence>
<evidence type="ECO:0000250" key="2">
    <source>
        <dbReference type="UniProtKB" id="P35497"/>
    </source>
</evidence>
<evidence type="ECO:0000250" key="3">
    <source>
        <dbReference type="UniProtKB" id="Q00796"/>
    </source>
</evidence>
<evidence type="ECO:0000305" key="4"/>
<name>DHSO2_YEAST</name>
<protein>
    <recommendedName>
        <fullName>Sorbitol dehydrogenase 2</fullName>
        <shortName>SDH 2</shortName>
        <ecNumber evidence="2">1.1.1.-</ecNumber>
    </recommendedName>
    <alternativeName>
        <fullName evidence="4">Polyol dehydrogenase</fullName>
    </alternativeName>
    <alternativeName>
        <fullName>Xylitol dehydrogenase</fullName>
        <ecNumber evidence="2">1.1.1.9</ecNumber>
    </alternativeName>
</protein>
<keyword id="KW-0479">Metal-binding</keyword>
<keyword id="KW-0520">NAD</keyword>
<keyword id="KW-0560">Oxidoreductase</keyword>
<keyword id="KW-1185">Reference proteome</keyword>
<keyword id="KW-0862">Zinc</keyword>
<reference key="1">
    <citation type="journal article" date="1997" name="Nature">
        <title>The nucleotide sequence of Saccharomyces cerevisiae chromosome IV.</title>
        <authorList>
            <person name="Jacq C."/>
            <person name="Alt-Moerbe J."/>
            <person name="Andre B."/>
            <person name="Arnold W."/>
            <person name="Bahr A."/>
            <person name="Ballesta J.P.G."/>
            <person name="Bargues M."/>
            <person name="Baron L."/>
            <person name="Becker A."/>
            <person name="Biteau N."/>
            <person name="Bloecker H."/>
            <person name="Blugeon C."/>
            <person name="Boskovic J."/>
            <person name="Brandt P."/>
            <person name="Brueckner M."/>
            <person name="Buitrago M.J."/>
            <person name="Coster F."/>
            <person name="Delaveau T."/>
            <person name="del Rey F."/>
            <person name="Dujon B."/>
            <person name="Eide L.G."/>
            <person name="Garcia-Cantalejo J.M."/>
            <person name="Goffeau A."/>
            <person name="Gomez-Peris A."/>
            <person name="Granotier C."/>
            <person name="Hanemann V."/>
            <person name="Hankeln T."/>
            <person name="Hoheisel J.D."/>
            <person name="Jaeger W."/>
            <person name="Jimenez A."/>
            <person name="Jonniaux J.-L."/>
            <person name="Kraemer C."/>
            <person name="Kuester H."/>
            <person name="Laamanen P."/>
            <person name="Legros Y."/>
            <person name="Louis E.J."/>
            <person name="Moeller-Rieker S."/>
            <person name="Monnet A."/>
            <person name="Moro M."/>
            <person name="Mueller-Auer S."/>
            <person name="Nussbaumer B."/>
            <person name="Paricio N."/>
            <person name="Paulin L."/>
            <person name="Perea J."/>
            <person name="Perez-Alonso M."/>
            <person name="Perez-Ortin J.E."/>
            <person name="Pohl T.M."/>
            <person name="Prydz H."/>
            <person name="Purnelle B."/>
            <person name="Rasmussen S.W."/>
            <person name="Remacha M.A."/>
            <person name="Revuelta J.L."/>
            <person name="Rieger M."/>
            <person name="Salom D."/>
            <person name="Saluz H.P."/>
            <person name="Saiz J.E."/>
            <person name="Saren A.-M."/>
            <person name="Schaefer M."/>
            <person name="Scharfe M."/>
            <person name="Schmidt E.R."/>
            <person name="Schneider C."/>
            <person name="Scholler P."/>
            <person name="Schwarz S."/>
            <person name="Soler-Mira A."/>
            <person name="Urrestarazu L.A."/>
            <person name="Verhasselt P."/>
            <person name="Vissers S."/>
            <person name="Voet M."/>
            <person name="Volckaert G."/>
            <person name="Wagner G."/>
            <person name="Wambutt R."/>
            <person name="Wedler E."/>
            <person name="Wedler H."/>
            <person name="Woelfl S."/>
            <person name="Harris D.E."/>
            <person name="Bowman S."/>
            <person name="Brown D."/>
            <person name="Churcher C.M."/>
            <person name="Connor R."/>
            <person name="Dedman K."/>
            <person name="Gentles S."/>
            <person name="Hamlin N."/>
            <person name="Hunt S."/>
            <person name="Jones L."/>
            <person name="McDonald S."/>
            <person name="Murphy L.D."/>
            <person name="Niblett D."/>
            <person name="Odell C."/>
            <person name="Oliver K."/>
            <person name="Rajandream M.A."/>
            <person name="Richards C."/>
            <person name="Shore L."/>
            <person name="Walsh S.V."/>
            <person name="Barrell B.G."/>
            <person name="Dietrich F.S."/>
            <person name="Mulligan J.T."/>
            <person name="Allen E."/>
            <person name="Araujo R."/>
            <person name="Aviles E."/>
            <person name="Berno A."/>
            <person name="Carpenter J."/>
            <person name="Chen E."/>
            <person name="Cherry J.M."/>
            <person name="Chung E."/>
            <person name="Duncan M."/>
            <person name="Hunicke-Smith S."/>
            <person name="Hyman R.W."/>
            <person name="Komp C."/>
            <person name="Lashkari D."/>
            <person name="Lew H."/>
            <person name="Lin D."/>
            <person name="Mosedale D."/>
            <person name="Nakahara K."/>
            <person name="Namath A."/>
            <person name="Oefner P."/>
            <person name="Oh C."/>
            <person name="Petel F.X."/>
            <person name="Roberts D."/>
            <person name="Schramm S."/>
            <person name="Schroeder M."/>
            <person name="Shogren T."/>
            <person name="Shroff N."/>
            <person name="Winant A."/>
            <person name="Yelton M.A."/>
            <person name="Botstein D."/>
            <person name="Davis R.W."/>
            <person name="Johnston M."/>
            <person name="Andrews S."/>
            <person name="Brinkman R."/>
            <person name="Cooper J."/>
            <person name="Ding H."/>
            <person name="Du Z."/>
            <person name="Favello A."/>
            <person name="Fulton L."/>
            <person name="Gattung S."/>
            <person name="Greco T."/>
            <person name="Hallsworth K."/>
            <person name="Hawkins J."/>
            <person name="Hillier L.W."/>
            <person name="Jier M."/>
            <person name="Johnson D."/>
            <person name="Johnston L."/>
            <person name="Kirsten J."/>
            <person name="Kucaba T."/>
            <person name="Langston Y."/>
            <person name="Latreille P."/>
            <person name="Le T."/>
            <person name="Mardis E."/>
            <person name="Menezes S."/>
            <person name="Miller N."/>
            <person name="Nhan M."/>
            <person name="Pauley A."/>
            <person name="Peluso D."/>
            <person name="Rifkin L."/>
            <person name="Riles L."/>
            <person name="Taich A."/>
            <person name="Trevaskis E."/>
            <person name="Vignati D."/>
            <person name="Wilcox L."/>
            <person name="Wohldman P."/>
            <person name="Vaudin M."/>
            <person name="Wilson R."/>
            <person name="Waterston R."/>
            <person name="Albermann K."/>
            <person name="Hani J."/>
            <person name="Heumann K."/>
            <person name="Kleine K."/>
            <person name="Mewes H.-W."/>
            <person name="Zollner A."/>
            <person name="Zaccaria P."/>
        </authorList>
    </citation>
    <scope>NUCLEOTIDE SEQUENCE [LARGE SCALE GENOMIC DNA]</scope>
    <source>
        <strain>ATCC 204508 / S288c</strain>
    </source>
</reference>
<reference key="2">
    <citation type="journal article" date="2014" name="G3 (Bethesda)">
        <title>The reference genome sequence of Saccharomyces cerevisiae: Then and now.</title>
        <authorList>
            <person name="Engel S.R."/>
            <person name="Dietrich F.S."/>
            <person name="Fisk D.G."/>
            <person name="Binkley G."/>
            <person name="Balakrishnan R."/>
            <person name="Costanzo M.C."/>
            <person name="Dwight S.S."/>
            <person name="Hitz B.C."/>
            <person name="Karra K."/>
            <person name="Nash R.S."/>
            <person name="Weng S."/>
            <person name="Wong E.D."/>
            <person name="Lloyd P."/>
            <person name="Skrzypek M.S."/>
            <person name="Miyasato S.R."/>
            <person name="Simison M."/>
            <person name="Cherry J.M."/>
        </authorList>
    </citation>
    <scope>GENOME REANNOTATION</scope>
    <source>
        <strain>ATCC 204508 / S288c</strain>
    </source>
</reference>
<sequence length="357" mass="38097">MSQNSNPAVVLEKVGDIAIEQRPIPTIKDPHYVKLAIKATGICGSDIHYYRSGGIGKYILKAPMVLGHESSGQVVEVGDAVTRVKVGDRVAIEPGVPSRYSDETKEGSYNLCPHMAFAATPPIDGTLVKYYLSPEDFLVKLPEGVSYEEGACVEPLSVGVHSNKLAGVRFGTKVVVFGAGPVGLLTGAVARAFGATDVIFVDVFDNKLQRAKDFGATNTFNSSQFSTDKAQDLADGVQKLLGGNHADVVFECSGADVCIDAAVKTTKVGGTMVQVGMGKNYTNFPIAEVSGKEMKLIGCFRYSFGDYRDAVNLVATGKVNVKPLITHKFKFEDAAKAYDYNIAHGGEVVKTIIFGPE</sequence>
<accession>Q07786</accession>
<accession>D6VRB1</accession>